<name>TM263_XENTR</name>
<protein>
    <recommendedName>
        <fullName>Transmembrane protein 263</fullName>
    </recommendedName>
</protein>
<gene>
    <name type="primary">tmem263</name>
</gene>
<reference key="1">
    <citation type="submission" date="2004-01" db="EMBL/GenBank/DDBJ databases">
        <authorList>
            <consortium name="NIH - Xenopus Gene Collection (XGC) project"/>
        </authorList>
    </citation>
    <scope>NUCLEOTIDE SEQUENCE [LARGE SCALE MRNA]</scope>
    <source>
        <tissue>Embryo</tissue>
    </source>
</reference>
<evidence type="ECO:0000250" key="1">
    <source>
        <dbReference type="UniProtKB" id="Q8WUH6"/>
    </source>
</evidence>
<evidence type="ECO:0000255" key="2"/>
<evidence type="ECO:0000305" key="3"/>
<sequence length="114" mass="11510">MSQTEKIEEAVPSYLCEEPPEGTVKDHPQQQPGMISRVTGGIFSMTKGAVGATIGGVAWIGGKSYEVTKTAVTSVPSIGVGIVKGSVSAVTGSVAAVGSVVSSKVSGKKKDKSD</sequence>
<organism>
    <name type="scientific">Xenopus tropicalis</name>
    <name type="common">Western clawed frog</name>
    <name type="synonym">Silurana tropicalis</name>
    <dbReference type="NCBI Taxonomy" id="8364"/>
    <lineage>
        <taxon>Eukaryota</taxon>
        <taxon>Metazoa</taxon>
        <taxon>Chordata</taxon>
        <taxon>Craniata</taxon>
        <taxon>Vertebrata</taxon>
        <taxon>Euteleostomi</taxon>
        <taxon>Amphibia</taxon>
        <taxon>Batrachia</taxon>
        <taxon>Anura</taxon>
        <taxon>Pipoidea</taxon>
        <taxon>Pipidae</taxon>
        <taxon>Xenopodinae</taxon>
        <taxon>Xenopus</taxon>
        <taxon>Silurana</taxon>
    </lineage>
</organism>
<keyword id="KW-0472">Membrane</keyword>
<keyword id="KW-1185">Reference proteome</keyword>
<keyword id="KW-0812">Transmembrane</keyword>
<keyword id="KW-1133">Transmembrane helix</keyword>
<accession>Q6P1V1</accession>
<dbReference type="EMBL" id="BC064860">
    <property type="protein sequence ID" value="AAH64860.1"/>
    <property type="molecule type" value="mRNA"/>
</dbReference>
<dbReference type="RefSeq" id="NP_989399.1">
    <property type="nucleotide sequence ID" value="NM_204068.1"/>
</dbReference>
<dbReference type="FunCoup" id="Q6P1V1">
    <property type="interactions" value="1125"/>
</dbReference>
<dbReference type="STRING" id="8364.ENSXETP00000025837"/>
<dbReference type="DNASU" id="395036"/>
<dbReference type="GeneID" id="395036"/>
<dbReference type="KEGG" id="xtr:395036"/>
<dbReference type="AGR" id="Xenbase:XB-GENE-6455845"/>
<dbReference type="CTD" id="90488"/>
<dbReference type="Xenbase" id="XB-GENE-6455845">
    <property type="gene designation" value="tmem263"/>
</dbReference>
<dbReference type="InParanoid" id="Q6P1V1"/>
<dbReference type="OMA" id="NNKDHPE"/>
<dbReference type="OrthoDB" id="6140834at2759"/>
<dbReference type="Proteomes" id="UP000008143">
    <property type="component" value="Chromosome 3"/>
</dbReference>
<dbReference type="Bgee" id="ENSXETG00000037976">
    <property type="expression patterns" value="Expressed in neurula embryo and 14 other cell types or tissues"/>
</dbReference>
<dbReference type="ExpressionAtlas" id="Q6P1V1">
    <property type="expression patterns" value="baseline and differential"/>
</dbReference>
<dbReference type="GO" id="GO:0016020">
    <property type="term" value="C:membrane"/>
    <property type="evidence" value="ECO:0007669"/>
    <property type="project" value="UniProtKB-SubCell"/>
</dbReference>
<dbReference type="InterPro" id="IPR028153">
    <property type="entry name" value="UPF0444"/>
</dbReference>
<dbReference type="PANTHER" id="PTHR31443">
    <property type="match status" value="1"/>
</dbReference>
<dbReference type="Pfam" id="PF15475">
    <property type="entry name" value="UPF0444"/>
    <property type="match status" value="1"/>
</dbReference>
<comment type="function">
    <text evidence="1">May play a role in bone development.</text>
</comment>
<comment type="subcellular location">
    <subcellularLocation>
        <location evidence="3">Membrane</location>
        <topology evidence="2">Multi-pass membrane protein</topology>
    </subcellularLocation>
</comment>
<comment type="similarity">
    <text evidence="3">Belongs to the TMEM263 family.</text>
</comment>
<feature type="chain" id="PRO_0000263634" description="Transmembrane protein 263">
    <location>
        <begin position="1"/>
        <end position="114"/>
    </location>
</feature>
<feature type="transmembrane region" description="Helical" evidence="2">
    <location>
        <begin position="40"/>
        <end position="60"/>
    </location>
</feature>
<feature type="transmembrane region" description="Helical" evidence="2">
    <location>
        <begin position="78"/>
        <end position="98"/>
    </location>
</feature>
<proteinExistence type="inferred from homology"/>